<reference key="1">
    <citation type="submission" date="2008-04" db="EMBL/GenBank/DDBJ databases">
        <title>Complete sequence of chromosome of Methylobacterium populi BJ001.</title>
        <authorList>
            <consortium name="US DOE Joint Genome Institute"/>
            <person name="Copeland A."/>
            <person name="Lucas S."/>
            <person name="Lapidus A."/>
            <person name="Glavina del Rio T."/>
            <person name="Dalin E."/>
            <person name="Tice H."/>
            <person name="Bruce D."/>
            <person name="Goodwin L."/>
            <person name="Pitluck S."/>
            <person name="Chertkov O."/>
            <person name="Brettin T."/>
            <person name="Detter J.C."/>
            <person name="Han C."/>
            <person name="Kuske C.R."/>
            <person name="Schmutz J."/>
            <person name="Larimer F."/>
            <person name="Land M."/>
            <person name="Hauser L."/>
            <person name="Kyrpides N."/>
            <person name="Mikhailova N."/>
            <person name="Marx C."/>
            <person name="Richardson P."/>
        </authorList>
    </citation>
    <scope>NUCLEOTIDE SEQUENCE [LARGE SCALE GENOMIC DNA]</scope>
    <source>
        <strain>ATCC BAA-705 / NCIMB 13946 / BJ001</strain>
    </source>
</reference>
<evidence type="ECO:0000255" key="1">
    <source>
        <dbReference type="HAMAP-Rule" id="MF_01595"/>
    </source>
</evidence>
<evidence type="ECO:0000256" key="2">
    <source>
        <dbReference type="SAM" id="MobiDB-lite"/>
    </source>
</evidence>
<comment type="function">
    <text evidence="1">Involved in mRNA degradation. Catalyzes the phosphorolysis of single-stranded polyribonucleotides processively in the 3'- to 5'-direction.</text>
</comment>
<comment type="catalytic activity">
    <reaction evidence="1">
        <text>RNA(n+1) + phosphate = RNA(n) + a ribonucleoside 5'-diphosphate</text>
        <dbReference type="Rhea" id="RHEA:22096"/>
        <dbReference type="Rhea" id="RHEA-COMP:14527"/>
        <dbReference type="Rhea" id="RHEA-COMP:17342"/>
        <dbReference type="ChEBI" id="CHEBI:43474"/>
        <dbReference type="ChEBI" id="CHEBI:57930"/>
        <dbReference type="ChEBI" id="CHEBI:140395"/>
        <dbReference type="EC" id="2.7.7.8"/>
    </reaction>
</comment>
<comment type="cofactor">
    <cofactor evidence="1">
        <name>Mg(2+)</name>
        <dbReference type="ChEBI" id="CHEBI:18420"/>
    </cofactor>
</comment>
<comment type="subcellular location">
    <subcellularLocation>
        <location evidence="1">Cytoplasm</location>
    </subcellularLocation>
</comment>
<comment type="similarity">
    <text evidence="1">Belongs to the polyribonucleotide nucleotidyltransferase family.</text>
</comment>
<proteinExistence type="inferred from homology"/>
<name>PNP_METPB</name>
<protein>
    <recommendedName>
        <fullName evidence="1">Polyribonucleotide nucleotidyltransferase</fullName>
        <ecNumber evidence="1">2.7.7.8</ecNumber>
    </recommendedName>
    <alternativeName>
        <fullName evidence="1">Polynucleotide phosphorylase</fullName>
        <shortName evidence="1">PNPase</shortName>
    </alternativeName>
</protein>
<dbReference type="EC" id="2.7.7.8" evidence="1"/>
<dbReference type="EMBL" id="CP001029">
    <property type="protein sequence ID" value="ACB82605.1"/>
    <property type="molecule type" value="Genomic_DNA"/>
</dbReference>
<dbReference type="RefSeq" id="WP_012456208.1">
    <property type="nucleotide sequence ID" value="NC_010725.1"/>
</dbReference>
<dbReference type="SMR" id="B1ZGS7"/>
<dbReference type="STRING" id="441620.Mpop_4507"/>
<dbReference type="KEGG" id="mpo:Mpop_4507"/>
<dbReference type="eggNOG" id="COG1185">
    <property type="taxonomic scope" value="Bacteria"/>
</dbReference>
<dbReference type="HOGENOM" id="CLU_004217_2_2_5"/>
<dbReference type="OrthoDB" id="9804305at2"/>
<dbReference type="Proteomes" id="UP000007136">
    <property type="component" value="Chromosome"/>
</dbReference>
<dbReference type="GO" id="GO:0005829">
    <property type="term" value="C:cytosol"/>
    <property type="evidence" value="ECO:0007669"/>
    <property type="project" value="TreeGrafter"/>
</dbReference>
<dbReference type="GO" id="GO:0000175">
    <property type="term" value="F:3'-5'-RNA exonuclease activity"/>
    <property type="evidence" value="ECO:0007669"/>
    <property type="project" value="TreeGrafter"/>
</dbReference>
<dbReference type="GO" id="GO:0000287">
    <property type="term" value="F:magnesium ion binding"/>
    <property type="evidence" value="ECO:0007669"/>
    <property type="project" value="UniProtKB-UniRule"/>
</dbReference>
<dbReference type="GO" id="GO:0004654">
    <property type="term" value="F:polyribonucleotide nucleotidyltransferase activity"/>
    <property type="evidence" value="ECO:0007669"/>
    <property type="project" value="UniProtKB-UniRule"/>
</dbReference>
<dbReference type="GO" id="GO:0003723">
    <property type="term" value="F:RNA binding"/>
    <property type="evidence" value="ECO:0007669"/>
    <property type="project" value="UniProtKB-UniRule"/>
</dbReference>
<dbReference type="GO" id="GO:0006402">
    <property type="term" value="P:mRNA catabolic process"/>
    <property type="evidence" value="ECO:0007669"/>
    <property type="project" value="UniProtKB-UniRule"/>
</dbReference>
<dbReference type="GO" id="GO:0006396">
    <property type="term" value="P:RNA processing"/>
    <property type="evidence" value="ECO:0007669"/>
    <property type="project" value="InterPro"/>
</dbReference>
<dbReference type="CDD" id="cd02393">
    <property type="entry name" value="KH-I_PNPase"/>
    <property type="match status" value="1"/>
</dbReference>
<dbReference type="CDD" id="cd11363">
    <property type="entry name" value="RNase_PH_PNPase_1"/>
    <property type="match status" value="1"/>
</dbReference>
<dbReference type="CDD" id="cd11364">
    <property type="entry name" value="RNase_PH_PNPase_2"/>
    <property type="match status" value="1"/>
</dbReference>
<dbReference type="CDD" id="cd04472">
    <property type="entry name" value="S1_PNPase"/>
    <property type="match status" value="1"/>
</dbReference>
<dbReference type="FunFam" id="2.40.50.140:FF:000107">
    <property type="entry name" value="Polyribonucleotide nucleotidyltransferase"/>
    <property type="match status" value="1"/>
</dbReference>
<dbReference type="FunFam" id="3.30.1370.10:FF:000001">
    <property type="entry name" value="Polyribonucleotide nucleotidyltransferase"/>
    <property type="match status" value="1"/>
</dbReference>
<dbReference type="FunFam" id="3.30.230.70:FF:000001">
    <property type="entry name" value="Polyribonucleotide nucleotidyltransferase"/>
    <property type="match status" value="1"/>
</dbReference>
<dbReference type="FunFam" id="3.30.230.70:FF:000002">
    <property type="entry name" value="Polyribonucleotide nucleotidyltransferase"/>
    <property type="match status" value="1"/>
</dbReference>
<dbReference type="Gene3D" id="3.30.230.70">
    <property type="entry name" value="GHMP Kinase, N-terminal domain"/>
    <property type="match status" value="2"/>
</dbReference>
<dbReference type="Gene3D" id="3.30.1370.10">
    <property type="entry name" value="K Homology domain, type 1"/>
    <property type="match status" value="1"/>
</dbReference>
<dbReference type="Gene3D" id="2.40.50.140">
    <property type="entry name" value="Nucleic acid-binding proteins"/>
    <property type="match status" value="1"/>
</dbReference>
<dbReference type="HAMAP" id="MF_01595">
    <property type="entry name" value="PNPase"/>
    <property type="match status" value="1"/>
</dbReference>
<dbReference type="InterPro" id="IPR001247">
    <property type="entry name" value="ExoRNase_PH_dom1"/>
</dbReference>
<dbReference type="InterPro" id="IPR015847">
    <property type="entry name" value="ExoRNase_PH_dom2"/>
</dbReference>
<dbReference type="InterPro" id="IPR036345">
    <property type="entry name" value="ExoRNase_PH_dom2_sf"/>
</dbReference>
<dbReference type="InterPro" id="IPR004087">
    <property type="entry name" value="KH_dom"/>
</dbReference>
<dbReference type="InterPro" id="IPR004088">
    <property type="entry name" value="KH_dom_type_1"/>
</dbReference>
<dbReference type="InterPro" id="IPR036612">
    <property type="entry name" value="KH_dom_type_1_sf"/>
</dbReference>
<dbReference type="InterPro" id="IPR012340">
    <property type="entry name" value="NA-bd_OB-fold"/>
</dbReference>
<dbReference type="InterPro" id="IPR012162">
    <property type="entry name" value="PNPase"/>
</dbReference>
<dbReference type="InterPro" id="IPR027408">
    <property type="entry name" value="PNPase/RNase_PH_dom_sf"/>
</dbReference>
<dbReference type="InterPro" id="IPR015848">
    <property type="entry name" value="PNPase_PH_RNA-bd_bac/org-type"/>
</dbReference>
<dbReference type="InterPro" id="IPR020568">
    <property type="entry name" value="Ribosomal_Su5_D2-typ_SF"/>
</dbReference>
<dbReference type="InterPro" id="IPR003029">
    <property type="entry name" value="S1_domain"/>
</dbReference>
<dbReference type="NCBIfam" id="TIGR03591">
    <property type="entry name" value="polynuc_phos"/>
    <property type="match status" value="1"/>
</dbReference>
<dbReference type="NCBIfam" id="NF008805">
    <property type="entry name" value="PRK11824.1"/>
    <property type="match status" value="1"/>
</dbReference>
<dbReference type="PANTHER" id="PTHR11252">
    <property type="entry name" value="POLYRIBONUCLEOTIDE NUCLEOTIDYLTRANSFERASE"/>
    <property type="match status" value="1"/>
</dbReference>
<dbReference type="PANTHER" id="PTHR11252:SF0">
    <property type="entry name" value="POLYRIBONUCLEOTIDE NUCLEOTIDYLTRANSFERASE 1, MITOCHONDRIAL"/>
    <property type="match status" value="1"/>
</dbReference>
<dbReference type="Pfam" id="PF00013">
    <property type="entry name" value="KH_1"/>
    <property type="match status" value="1"/>
</dbReference>
<dbReference type="Pfam" id="PF03726">
    <property type="entry name" value="PNPase"/>
    <property type="match status" value="1"/>
</dbReference>
<dbReference type="Pfam" id="PF01138">
    <property type="entry name" value="RNase_PH"/>
    <property type="match status" value="2"/>
</dbReference>
<dbReference type="Pfam" id="PF03725">
    <property type="entry name" value="RNase_PH_C"/>
    <property type="match status" value="2"/>
</dbReference>
<dbReference type="Pfam" id="PF00575">
    <property type="entry name" value="S1"/>
    <property type="match status" value="1"/>
</dbReference>
<dbReference type="PIRSF" id="PIRSF005499">
    <property type="entry name" value="PNPase"/>
    <property type="match status" value="1"/>
</dbReference>
<dbReference type="SMART" id="SM00322">
    <property type="entry name" value="KH"/>
    <property type="match status" value="1"/>
</dbReference>
<dbReference type="SMART" id="SM00316">
    <property type="entry name" value="S1"/>
    <property type="match status" value="1"/>
</dbReference>
<dbReference type="SUPFAM" id="SSF54791">
    <property type="entry name" value="Eukaryotic type KH-domain (KH-domain type I)"/>
    <property type="match status" value="1"/>
</dbReference>
<dbReference type="SUPFAM" id="SSF50249">
    <property type="entry name" value="Nucleic acid-binding proteins"/>
    <property type="match status" value="1"/>
</dbReference>
<dbReference type="SUPFAM" id="SSF55666">
    <property type="entry name" value="Ribonuclease PH domain 2-like"/>
    <property type="match status" value="2"/>
</dbReference>
<dbReference type="SUPFAM" id="SSF54211">
    <property type="entry name" value="Ribosomal protein S5 domain 2-like"/>
    <property type="match status" value="2"/>
</dbReference>
<dbReference type="PROSITE" id="PS50084">
    <property type="entry name" value="KH_TYPE_1"/>
    <property type="match status" value="1"/>
</dbReference>
<dbReference type="PROSITE" id="PS50126">
    <property type="entry name" value="S1"/>
    <property type="match status" value="1"/>
</dbReference>
<gene>
    <name evidence="1" type="primary">pnp</name>
    <name type="ordered locus">Mpop_4507</name>
</gene>
<feature type="chain" id="PRO_1000147930" description="Polyribonucleotide nucleotidyltransferase">
    <location>
        <begin position="1"/>
        <end position="745"/>
    </location>
</feature>
<feature type="domain" description="KH" evidence="1">
    <location>
        <begin position="554"/>
        <end position="613"/>
    </location>
</feature>
<feature type="domain" description="S1 motif" evidence="1">
    <location>
        <begin position="623"/>
        <end position="691"/>
    </location>
</feature>
<feature type="region of interest" description="Disordered" evidence="2">
    <location>
        <begin position="695"/>
        <end position="745"/>
    </location>
</feature>
<feature type="compositionally biased region" description="Basic and acidic residues" evidence="2">
    <location>
        <begin position="701"/>
        <end position="745"/>
    </location>
</feature>
<feature type="binding site" evidence="1">
    <location>
        <position position="487"/>
    </location>
    <ligand>
        <name>Mg(2+)</name>
        <dbReference type="ChEBI" id="CHEBI:18420"/>
    </ligand>
</feature>
<feature type="binding site" evidence="1">
    <location>
        <position position="493"/>
    </location>
    <ligand>
        <name>Mg(2+)</name>
        <dbReference type="ChEBI" id="CHEBI:18420"/>
    </ligand>
</feature>
<accession>B1ZGS7</accession>
<sequence>MFDVQREELIWGDRKLVLETGKTARQADGAVVATYGETTVLATVVAAKEPKAGIDFMPLTVNYQERAYAAGRIPGGYFKREGRPSEKETLVSRLIDRPIRPLFVEGWRNDTQVVVTVLSHDLENDPDIVSMVAASAALTLSGVPFMGPIGAARVGYLNGGYKLNPLVTEVAESTLDLVVAGTQDAVLMVESEAKELSEDVMLGAVMFGHKHFQPVIEAIIRLAEKAAKEPRDFSPPENADVEKAVLDICESELRDAYKITVKQDRYKAVDAVKAKVVAALCPAEGEQKFSPEKVKAAFKEAQSKVVRWNILDTGSRIDGRDVKTVRPIVSEVGVLPRAHGSSLFTRGETQALVVATLGTGEDEQFIDALEGTYKERFLLHYNFPPYSVGETGRMGSPGRREIGHGKLAWRAIRPVLPPAHEFPYTIRVVSEITESNGSSSMASVCGGSLSLMDAGVPLRRPVAGIAMGLILEGERFAVLSDILGDEDHLGDMDFKVAGTDEGITSLQMDIKIAGITEEIMRVALAQAKDGRAHILGEMAQALTAARPELGEYAPRIETMQIPTDKIRDVIGTGGKIIREIVEKTGAKINIEDTGVVKIASSDGKAIKAAYNWIRSIVAEPEAGTIYDGTIVKIMEFGAFVNFFGAKDGLVHISELAPQRVAKVGDVVKEGQKVKVKFLGADERGKIRLSMKVVDQETGEDITEKLKAERAERGEPEREERSDRGDRGDRGPRRDRGERRRESSGE</sequence>
<keyword id="KW-0963">Cytoplasm</keyword>
<keyword id="KW-0460">Magnesium</keyword>
<keyword id="KW-0479">Metal-binding</keyword>
<keyword id="KW-0548">Nucleotidyltransferase</keyword>
<keyword id="KW-0694">RNA-binding</keyword>
<keyword id="KW-0808">Transferase</keyword>
<organism>
    <name type="scientific">Methylorubrum populi (strain ATCC BAA-705 / NCIMB 13946 / BJ001)</name>
    <name type="common">Methylobacterium populi</name>
    <dbReference type="NCBI Taxonomy" id="441620"/>
    <lineage>
        <taxon>Bacteria</taxon>
        <taxon>Pseudomonadati</taxon>
        <taxon>Pseudomonadota</taxon>
        <taxon>Alphaproteobacteria</taxon>
        <taxon>Hyphomicrobiales</taxon>
        <taxon>Methylobacteriaceae</taxon>
        <taxon>Methylorubrum</taxon>
    </lineage>
</organism>